<name>TERL_BPT5</name>
<gene>
    <name evidence="9" type="ORF">ORF144</name>
    <name evidence="7" type="ORF">T5.155</name>
    <name evidence="8" type="ORF">T5p151</name>
</gene>
<accession>Q6QGD2</accession>
<accession>Q66LR2</accession>
<dbReference type="EC" id="3.6.4.-" evidence="1"/>
<dbReference type="EC" id="3.1.21.-" evidence="1 6"/>
<dbReference type="EMBL" id="AY543070">
    <property type="protein sequence ID" value="AAS77194.1"/>
    <property type="molecule type" value="Genomic_DNA"/>
</dbReference>
<dbReference type="EMBL" id="AY692264">
    <property type="protein sequence ID" value="AAU05290.1"/>
    <property type="molecule type" value="Genomic_DNA"/>
</dbReference>
<dbReference type="EMBL" id="AY587007">
    <property type="protein sequence ID" value="AAX12081.1"/>
    <property type="molecule type" value="Genomic_DNA"/>
</dbReference>
<dbReference type="RefSeq" id="YP_006983.1">
    <property type="nucleotide sequence ID" value="NC_005859.1"/>
</dbReference>
<dbReference type="SMR" id="Q6QGD2"/>
<dbReference type="GeneID" id="2777679"/>
<dbReference type="KEGG" id="vg:2777679"/>
<dbReference type="Proteomes" id="UP000002107">
    <property type="component" value="Genome"/>
</dbReference>
<dbReference type="Proteomes" id="UP000002141">
    <property type="component" value="Segment"/>
</dbReference>
<dbReference type="Proteomes" id="UP000002503">
    <property type="component" value="Segment"/>
</dbReference>
<dbReference type="GO" id="GO:0098009">
    <property type="term" value="C:viral terminase, large subunit"/>
    <property type="evidence" value="ECO:0007669"/>
    <property type="project" value="UniProtKB-UniRule"/>
</dbReference>
<dbReference type="GO" id="GO:0005524">
    <property type="term" value="F:ATP binding"/>
    <property type="evidence" value="ECO:0007669"/>
    <property type="project" value="UniProtKB-KW"/>
</dbReference>
<dbReference type="GO" id="GO:0016887">
    <property type="term" value="F:ATP hydrolysis activity"/>
    <property type="evidence" value="ECO:0007669"/>
    <property type="project" value="InterPro"/>
</dbReference>
<dbReference type="GO" id="GO:0004519">
    <property type="term" value="F:endonuclease activity"/>
    <property type="evidence" value="ECO:0007669"/>
    <property type="project" value="UniProtKB-UniRule"/>
</dbReference>
<dbReference type="GO" id="GO:0046872">
    <property type="term" value="F:metal ion binding"/>
    <property type="evidence" value="ECO:0007669"/>
    <property type="project" value="UniProtKB-UniRule"/>
</dbReference>
<dbReference type="GO" id="GO:0004518">
    <property type="term" value="F:nuclease activity"/>
    <property type="evidence" value="ECO:0000314"/>
    <property type="project" value="UniProtKB"/>
</dbReference>
<dbReference type="GO" id="GO:0051276">
    <property type="term" value="P:chromosome organization"/>
    <property type="evidence" value="ECO:0007669"/>
    <property type="project" value="UniProtKB-UniRule"/>
</dbReference>
<dbReference type="GO" id="GO:0019073">
    <property type="term" value="P:viral DNA genome packaging"/>
    <property type="evidence" value="ECO:0007669"/>
    <property type="project" value="UniProtKB-UniRule"/>
</dbReference>
<dbReference type="FunFam" id="3.30.420.280:FF:000001">
    <property type="entry name" value="Terminase large subunit"/>
    <property type="match status" value="1"/>
</dbReference>
<dbReference type="FunFam" id="3.40.50.300:FF:001203">
    <property type="entry name" value="Terminase large subunit"/>
    <property type="match status" value="1"/>
</dbReference>
<dbReference type="Gene3D" id="3.30.420.280">
    <property type="match status" value="1"/>
</dbReference>
<dbReference type="Gene3D" id="3.40.50.300">
    <property type="entry name" value="P-loop containing nucleotide triphosphate hydrolases"/>
    <property type="match status" value="1"/>
</dbReference>
<dbReference type="HAMAP" id="MF_04146">
    <property type="entry name" value="TERL_T4"/>
    <property type="match status" value="1"/>
</dbReference>
<dbReference type="InterPro" id="IPR027417">
    <property type="entry name" value="P-loop_NTPase"/>
</dbReference>
<dbReference type="InterPro" id="IPR035421">
    <property type="entry name" value="Terminase_6C"/>
</dbReference>
<dbReference type="InterPro" id="IPR044267">
    <property type="entry name" value="Terminase_large_su_gp17-like"/>
</dbReference>
<dbReference type="InterPro" id="IPR052380">
    <property type="entry name" value="Viral_DNA_packaging_terminase"/>
</dbReference>
<dbReference type="PANTHER" id="PTHR39184">
    <property type="match status" value="1"/>
</dbReference>
<dbReference type="PANTHER" id="PTHR39184:SF1">
    <property type="entry name" value="PBSX PHAGE TERMINASE LARGE SUBUNIT"/>
    <property type="match status" value="1"/>
</dbReference>
<dbReference type="Pfam" id="PF17289">
    <property type="entry name" value="Terminase_6C"/>
    <property type="match status" value="1"/>
</dbReference>
<dbReference type="Pfam" id="PF03237">
    <property type="entry name" value="Terminase_6N"/>
    <property type="match status" value="1"/>
</dbReference>
<dbReference type="SUPFAM" id="SSF52540">
    <property type="entry name" value="P-loop containing nucleoside triphosphate hydrolases"/>
    <property type="match status" value="1"/>
</dbReference>
<proteinExistence type="evidence at protein level"/>
<organism>
    <name type="scientific">Escherichia phage T5</name>
    <name type="common">Enterobacteria phage T5</name>
    <dbReference type="NCBI Taxonomy" id="2695836"/>
    <lineage>
        <taxon>Viruses</taxon>
        <taxon>Duplodnaviria</taxon>
        <taxon>Heunggongvirae</taxon>
        <taxon>Uroviricota</taxon>
        <taxon>Caudoviricetes</taxon>
        <taxon>Demerecviridae</taxon>
        <taxon>Markadamsvirinae</taxon>
        <taxon>Tequintavirus</taxon>
        <taxon>Tequintavirus T5</taxon>
    </lineage>
</organism>
<feature type="chain" id="PRO_0000434542" description="Terminase, large subunit">
    <location>
        <begin position="1"/>
        <end position="438"/>
    </location>
</feature>
<feature type="short sequence motif" description="Walker A motif" evidence="1 6">
    <location>
        <begin position="62"/>
        <end position="68"/>
    </location>
</feature>
<feature type="short sequence motif" description="Walker B motif" evidence="1 6">
    <location>
        <begin position="150"/>
        <end position="155"/>
    </location>
</feature>
<feature type="active site" description="For ATPase activity" evidence="1">
    <location>
        <position position="155"/>
    </location>
</feature>
<feature type="binding site" evidence="1 6">
    <location>
        <position position="286"/>
    </location>
    <ligand>
        <name>Mg(2+)</name>
        <dbReference type="ChEBI" id="CHEBI:18420"/>
        <label>1</label>
        <note>catalytic; for nuclease activity</note>
    </ligand>
</feature>
<feature type="binding site" evidence="1 6">
    <location>
        <position position="286"/>
    </location>
    <ligand>
        <name>Mg(2+)</name>
        <dbReference type="ChEBI" id="CHEBI:18420"/>
        <label>2</label>
        <note>catalytic; for nuclease activity</note>
    </ligand>
</feature>
<feature type="binding site" evidence="1 6">
    <location>
        <position position="342"/>
    </location>
    <ligand>
        <name>Mg(2+)</name>
        <dbReference type="ChEBI" id="CHEBI:18420"/>
        <label>2</label>
        <note>catalytic; for nuclease activity</note>
    </ligand>
</feature>
<feature type="binding site" evidence="1 6">
    <location>
        <position position="418"/>
    </location>
    <ligand>
        <name>Mg(2+)</name>
        <dbReference type="ChEBI" id="CHEBI:18420"/>
        <label>1</label>
        <note>catalytic; for nuclease activity</note>
    </ligand>
</feature>
<feature type="mutagenesis site" description="50% loss of endonuclease activity." evidence="2">
    <original>D</original>
    <variation>N</variation>
    <location>
        <position position="286"/>
    </location>
</feature>
<feature type="mutagenesis site" description="Almost complete loss of endonuclease activity." evidence="2">
    <original>D</original>
    <variation>N</variation>
    <location>
        <position position="342"/>
    </location>
</feature>
<feature type="mutagenesis site" description="50% loss of endonuclease activity." evidence="2">
    <original>D</original>
    <variation>N</variation>
    <location>
        <position position="425"/>
    </location>
</feature>
<feature type="sequence conflict" description="In Ref. 3; AAU05290." evidence="4" ref="3">
    <original>I</original>
    <variation>T</variation>
    <location>
        <position position="260"/>
    </location>
</feature>
<reference key="1">
    <citation type="submission" date="2004-01" db="EMBL/GenBank/DDBJ databases">
        <title>Bacteriophage T5 complete genome.</title>
        <authorList>
            <person name="Ksenzenko V.N."/>
            <person name="Kaliman A.V."/>
            <person name="Krutilina A.I."/>
            <person name="Shlyapnikov M.G."/>
        </authorList>
    </citation>
    <scope>NUCLEOTIDE SEQUENCE [LARGE SCALE GENOMIC DNA]</scope>
</reference>
<reference key="2">
    <citation type="journal article" date="2005" name="Virology">
        <title>Complete genome sequence of bacteriophage T5.</title>
        <authorList>
            <person name="Wang J."/>
            <person name="Jiang Y."/>
            <person name="Vincent M."/>
            <person name="Sun Y."/>
            <person name="Yu H."/>
            <person name="Wang J."/>
            <person name="Bao Q."/>
            <person name="Kong H."/>
            <person name="Hu S."/>
        </authorList>
    </citation>
    <scope>NUCLEOTIDE SEQUENCE [GENOMIC DNA]</scope>
    <scope>INDUCTION</scope>
    <source>
        <strain evidence="9">ATCC 11303-B5</strain>
    </source>
</reference>
<reference key="3">
    <citation type="journal article" date="2014" name="J. Virol.">
        <title>Insights into bacteriophage T5 structure from analysis of its morphogenesis genes and protein components.</title>
        <authorList>
            <person name="Zivanovic Y."/>
            <person name="Confalonieri F."/>
            <person name="Ponchon L."/>
            <person name="Lurz R."/>
            <person name="Chami M."/>
            <person name="Flayhan A."/>
            <person name="Renouard M."/>
            <person name="Huet A."/>
            <person name="Decottignies P."/>
            <person name="Davidson A.R."/>
            <person name="Breyton C."/>
            <person name="Boulanger P."/>
        </authorList>
    </citation>
    <scope>NUCLEOTIDE SEQUENCE [LARGE SCALE GENOMIC DNA]</scope>
    <source>
        <strain>St0 deletion mutant</strain>
    </source>
</reference>
<reference key="4">
    <citation type="journal article" date="2009" name="Methods Mol. Biol.">
        <title>Determining DNA packaging strategy by analysis of the termini of the chromosomes in tailed-bacteriophage virions.</title>
        <authorList>
            <person name="Casjens S.R."/>
            <person name="Gilcrease E.B."/>
        </authorList>
    </citation>
    <scope>REVIEW</scope>
</reference>
<reference key="5">
    <citation type="journal article" date="2006" name="J. Biol. Chem.">
        <title>The endonuclease domain of bacteriophage terminases belongs to the resolvase/integrase/ribonuclease H superfamily: a bioinformatics analysis validated by a functional study on bacteriophage T5.</title>
        <authorList>
            <person name="Ponchon L."/>
            <person name="Boulanger P."/>
            <person name="Labesse G."/>
            <person name="Letellier L."/>
        </authorList>
    </citation>
    <scope>CATALYTIC ACTIVITY</scope>
    <scope>ACTIVE SITE</scope>
    <scope>MUTAGENESIS OF ASP-286; ASP-342 AND ASP-425</scope>
</reference>
<protein>
    <recommendedName>
        <fullName evidence="1">Terminase, large subunit</fullName>
    </recommendedName>
    <alternativeName>
        <fullName evidence="1">DNA-packaging protein</fullName>
    </alternativeName>
    <domain>
        <recommendedName>
            <fullName evidence="1">ATPase</fullName>
            <ecNumber evidence="1">3.6.4.-</ecNumber>
        </recommendedName>
    </domain>
    <domain>
        <recommendedName>
            <fullName evidence="1">Endonuclease</fullName>
            <ecNumber evidence="1 6">3.1.21.-</ecNumber>
        </recommendedName>
    </domain>
</protein>
<keyword id="KW-0067">ATP-binding</keyword>
<keyword id="KW-0255">Endonuclease</keyword>
<keyword id="KW-0378">Hydrolase</keyword>
<keyword id="KW-0460">Magnesium</keyword>
<keyword id="KW-0479">Metal-binding</keyword>
<keyword id="KW-0540">Nuclease</keyword>
<keyword id="KW-0547">Nucleotide-binding</keyword>
<keyword id="KW-1185">Reference proteome</keyword>
<keyword id="KW-0231">Viral genome packaging</keyword>
<keyword id="KW-1188">Viral release from host cell</keyword>
<sequence length="438" mass="49717">MEVSRPYVNTVDVIDFGIDKRFFRLPVSGILAQEGITPNGPQIAIINALEDPRHRFVTACVSRRVGKSFIAYTLGFLKLLEPNVKVLVVAPNYSLANIGWSQIRGLIKKYGLQTERENAKDKEIELANGSLFKLASAAQADSAVGRSYDFIIFDEAAISDVGGDAFRVQLRPTLDKPNSKALFISTPRGGNWFKEFYAYGFDDTLPNWVSIHGTYRDNPRADLNDIEEARRTVSKNYFRQEYEADFSVFEGQIFDTFNAIDHVKDLKGMRHFFKDDEAFETLLGIDVGYRDPTAVLTIKYHYDTDTYYVLEEYQQAEKTTAQHAAYIQHCIDRYKVDRIFVDSAAAQFRQDLAYEHEIASAPAKKSVLDGLACLQALFQQGKIIVDASCSSLIHALQNYKWDFQEGEEKLSREKPRHDANSHLCDALRYGIYSISRGK</sequence>
<evidence type="ECO:0000255" key="1">
    <source>
        <dbReference type="HAMAP-Rule" id="MF_04146"/>
    </source>
</evidence>
<evidence type="ECO:0000269" key="2">
    <source>
    </source>
</evidence>
<evidence type="ECO:0000303" key="3">
    <source>
    </source>
</evidence>
<evidence type="ECO:0000305" key="4"/>
<evidence type="ECO:0000305" key="5">
    <source>
    </source>
</evidence>
<evidence type="ECO:0000305" key="6">
    <source>
    </source>
</evidence>
<evidence type="ECO:0000312" key="7">
    <source>
        <dbReference type="EMBL" id="AAS77194.1"/>
    </source>
</evidence>
<evidence type="ECO:0000312" key="8">
    <source>
        <dbReference type="EMBL" id="AAU05290.1"/>
    </source>
</evidence>
<evidence type="ECO:0000312" key="9">
    <source>
        <dbReference type="EMBL" id="AAX12081.1"/>
    </source>
</evidence>
<organismHost>
    <name type="scientific">Escherichia coli</name>
    <dbReference type="NCBI Taxonomy" id="562"/>
</organismHost>
<comment type="function">
    <text evidence="1 3">The terminase large subunit acts as an ATP driven molecular motor necessary for viral DNA translocation into empty capsids and as an endonuclease that cuts the viral genome to initiate and to end a packaging reaction The terminase lies at a unique vertex of the procapsid and is composed of two subunits, a small terminase subunit involved in viral DNA recognition (packaging sequence), and a large terminase subunit possessing endonucleolytic and ATPase activities. Both terminase subunits heterooligomerize and are docked on the portal protein to form the packaging machine. The terminase large subunit exhibits endonuclease activity and cleaves the viral genome concatemer. Direct long terminal repeats at each end of the genome are duplicated in concert with packaging (PubMed:19082553). Once the capsid is packaged with the DNA, the terminase complex is substituted by the tail.</text>
</comment>
<comment type="cofactor">
    <cofactor evidence="1 6">
        <name>Mg(2+)</name>
        <dbReference type="ChEBI" id="CHEBI:18420"/>
    </cofactor>
    <text evidence="1 6">ATPase activity requires 1 Mg(2+) ion per subunit. Nuclease activity probably requires 2 Mg(2+) ions per subunit.</text>
</comment>
<comment type="subunit">
    <text evidence="1">Interacts with the terminase small subunit; the active complex is probably heterooligomeric. Interacts with the portal protein.</text>
</comment>
<comment type="induction">
    <text evidence="5">Expressed in the late phase of the viral replicative cycle.</text>
</comment>
<comment type="domain">
    <text evidence="1">The N-terminus contains an ATPase domain. The C-terminus contains an endonuclease domain.</text>
</comment>
<comment type="similarity">
    <text evidence="1">Belongs to the Tequatrovirus large terminase family.</text>
</comment>